<gene>
    <name evidence="3" type="primary">THI13</name>
    <name evidence="6" type="ordered locus">YDL244W</name>
</gene>
<accession>Q07748</accession>
<accession>D6VRB3</accession>
<sequence length="340" mass="38574">MSTDKITFLLNWQPTPYHIPIFLAQTKGYFKEQGLDIAILEPTNPSDVTELIGSGKVDMGLKAMIHTLAAKARGFPVTSVASLLDEPFTGVLYLKGSGITEDFQSLKGKKIGYVGEFGKIQIDELTKHYGMKPEDYTAVRCGMNVAKYIIEGKIDAGIGIECMQQVELEEYLAKQGRPASDAKMLRIDKLACLGCCCFCTVLYICNDEFLKKNPEKVRKFLKAIKKATDYVLADPVKAWKEYIDFKPQLNNDLSYKQYQRCYAYFSSSLYNVHRDWKKVTGYGKRLAILPPDYVSNYTNEYLSWPEPEEVSDPLEAQRLMAIHQEKCRQEGTFKRLALPA</sequence>
<evidence type="ECO:0000250" key="1">
    <source>
        <dbReference type="UniProtKB" id="C4YMW2"/>
    </source>
</evidence>
<evidence type="ECO:0000250" key="2">
    <source>
        <dbReference type="UniProtKB" id="P43534"/>
    </source>
</evidence>
<evidence type="ECO:0000303" key="3">
    <source>
    </source>
</evidence>
<evidence type="ECO:0000305" key="4"/>
<evidence type="ECO:0000305" key="5">
    <source>
    </source>
</evidence>
<evidence type="ECO:0000312" key="6">
    <source>
        <dbReference type="SGD" id="S000002403"/>
    </source>
</evidence>
<keyword id="KW-0408">Iron</keyword>
<keyword id="KW-0479">Metal-binding</keyword>
<keyword id="KW-0663">Pyridoxal phosphate</keyword>
<keyword id="KW-1185">Reference proteome</keyword>
<keyword id="KW-0784">Thiamine biosynthesis</keyword>
<keyword id="KW-0808">Transferase</keyword>
<name>THI13_YEAST</name>
<reference key="1">
    <citation type="journal article" date="1997" name="Nature">
        <title>The nucleotide sequence of Saccharomyces cerevisiae chromosome IV.</title>
        <authorList>
            <person name="Jacq C."/>
            <person name="Alt-Moerbe J."/>
            <person name="Andre B."/>
            <person name="Arnold W."/>
            <person name="Bahr A."/>
            <person name="Ballesta J.P.G."/>
            <person name="Bargues M."/>
            <person name="Baron L."/>
            <person name="Becker A."/>
            <person name="Biteau N."/>
            <person name="Bloecker H."/>
            <person name="Blugeon C."/>
            <person name="Boskovic J."/>
            <person name="Brandt P."/>
            <person name="Brueckner M."/>
            <person name="Buitrago M.J."/>
            <person name="Coster F."/>
            <person name="Delaveau T."/>
            <person name="del Rey F."/>
            <person name="Dujon B."/>
            <person name="Eide L.G."/>
            <person name="Garcia-Cantalejo J.M."/>
            <person name="Goffeau A."/>
            <person name="Gomez-Peris A."/>
            <person name="Granotier C."/>
            <person name="Hanemann V."/>
            <person name="Hankeln T."/>
            <person name="Hoheisel J.D."/>
            <person name="Jaeger W."/>
            <person name="Jimenez A."/>
            <person name="Jonniaux J.-L."/>
            <person name="Kraemer C."/>
            <person name="Kuester H."/>
            <person name="Laamanen P."/>
            <person name="Legros Y."/>
            <person name="Louis E.J."/>
            <person name="Moeller-Rieker S."/>
            <person name="Monnet A."/>
            <person name="Moro M."/>
            <person name="Mueller-Auer S."/>
            <person name="Nussbaumer B."/>
            <person name="Paricio N."/>
            <person name="Paulin L."/>
            <person name="Perea J."/>
            <person name="Perez-Alonso M."/>
            <person name="Perez-Ortin J.E."/>
            <person name="Pohl T.M."/>
            <person name="Prydz H."/>
            <person name="Purnelle B."/>
            <person name="Rasmussen S.W."/>
            <person name="Remacha M.A."/>
            <person name="Revuelta J.L."/>
            <person name="Rieger M."/>
            <person name="Salom D."/>
            <person name="Saluz H.P."/>
            <person name="Saiz J.E."/>
            <person name="Saren A.-M."/>
            <person name="Schaefer M."/>
            <person name="Scharfe M."/>
            <person name="Schmidt E.R."/>
            <person name="Schneider C."/>
            <person name="Scholler P."/>
            <person name="Schwarz S."/>
            <person name="Soler-Mira A."/>
            <person name="Urrestarazu L.A."/>
            <person name="Verhasselt P."/>
            <person name="Vissers S."/>
            <person name="Voet M."/>
            <person name="Volckaert G."/>
            <person name="Wagner G."/>
            <person name="Wambutt R."/>
            <person name="Wedler E."/>
            <person name="Wedler H."/>
            <person name="Woelfl S."/>
            <person name="Harris D.E."/>
            <person name="Bowman S."/>
            <person name="Brown D."/>
            <person name="Churcher C.M."/>
            <person name="Connor R."/>
            <person name="Dedman K."/>
            <person name="Gentles S."/>
            <person name="Hamlin N."/>
            <person name="Hunt S."/>
            <person name="Jones L."/>
            <person name="McDonald S."/>
            <person name="Murphy L.D."/>
            <person name="Niblett D."/>
            <person name="Odell C."/>
            <person name="Oliver K."/>
            <person name="Rajandream M.A."/>
            <person name="Richards C."/>
            <person name="Shore L."/>
            <person name="Walsh S.V."/>
            <person name="Barrell B.G."/>
            <person name="Dietrich F.S."/>
            <person name="Mulligan J.T."/>
            <person name="Allen E."/>
            <person name="Araujo R."/>
            <person name="Aviles E."/>
            <person name="Berno A."/>
            <person name="Carpenter J."/>
            <person name="Chen E."/>
            <person name="Cherry J.M."/>
            <person name="Chung E."/>
            <person name="Duncan M."/>
            <person name="Hunicke-Smith S."/>
            <person name="Hyman R.W."/>
            <person name="Komp C."/>
            <person name="Lashkari D."/>
            <person name="Lew H."/>
            <person name="Lin D."/>
            <person name="Mosedale D."/>
            <person name="Nakahara K."/>
            <person name="Namath A."/>
            <person name="Oefner P."/>
            <person name="Oh C."/>
            <person name="Petel F.X."/>
            <person name="Roberts D."/>
            <person name="Schramm S."/>
            <person name="Schroeder M."/>
            <person name="Shogren T."/>
            <person name="Shroff N."/>
            <person name="Winant A."/>
            <person name="Yelton M.A."/>
            <person name="Botstein D."/>
            <person name="Davis R.W."/>
            <person name="Johnston M."/>
            <person name="Andrews S."/>
            <person name="Brinkman R."/>
            <person name="Cooper J."/>
            <person name="Ding H."/>
            <person name="Du Z."/>
            <person name="Favello A."/>
            <person name="Fulton L."/>
            <person name="Gattung S."/>
            <person name="Greco T."/>
            <person name="Hallsworth K."/>
            <person name="Hawkins J."/>
            <person name="Hillier L.W."/>
            <person name="Jier M."/>
            <person name="Johnson D."/>
            <person name="Johnston L."/>
            <person name="Kirsten J."/>
            <person name="Kucaba T."/>
            <person name="Langston Y."/>
            <person name="Latreille P."/>
            <person name="Le T."/>
            <person name="Mardis E."/>
            <person name="Menezes S."/>
            <person name="Miller N."/>
            <person name="Nhan M."/>
            <person name="Pauley A."/>
            <person name="Peluso D."/>
            <person name="Rifkin L."/>
            <person name="Riles L."/>
            <person name="Taich A."/>
            <person name="Trevaskis E."/>
            <person name="Vignati D."/>
            <person name="Wilcox L."/>
            <person name="Wohldman P."/>
            <person name="Vaudin M."/>
            <person name="Wilson R."/>
            <person name="Waterston R."/>
            <person name="Albermann K."/>
            <person name="Hani J."/>
            <person name="Heumann K."/>
            <person name="Kleine K."/>
            <person name="Mewes H.-W."/>
            <person name="Zollner A."/>
            <person name="Zaccaria P."/>
        </authorList>
    </citation>
    <scope>NUCLEOTIDE SEQUENCE [LARGE SCALE GENOMIC DNA]</scope>
    <source>
        <strain>ATCC 204508 / S288c</strain>
    </source>
</reference>
<reference key="2">
    <citation type="journal article" date="2014" name="G3 (Bethesda)">
        <title>The reference genome sequence of Saccharomyces cerevisiae: Then and now.</title>
        <authorList>
            <person name="Engel S.R."/>
            <person name="Dietrich F.S."/>
            <person name="Fisk D.G."/>
            <person name="Binkley G."/>
            <person name="Balakrishnan R."/>
            <person name="Costanzo M.C."/>
            <person name="Dwight S.S."/>
            <person name="Hitz B.C."/>
            <person name="Karra K."/>
            <person name="Nash R.S."/>
            <person name="Weng S."/>
            <person name="Wong E.D."/>
            <person name="Lloyd P."/>
            <person name="Skrzypek M.S."/>
            <person name="Miyasato S.R."/>
            <person name="Simison M."/>
            <person name="Cherry J.M."/>
        </authorList>
    </citation>
    <scope>GENOME REANNOTATION</scope>
    <source>
        <strain>ATCC 204508 / S288c</strain>
    </source>
</reference>
<reference key="3">
    <citation type="journal article" date="2003" name="Microbiology">
        <title>The THI5 gene family of Saccharomyces cerevisiae: distribution of homologues among the hemiascomycetes and functional redundancy in the aerobic biosynthesis of thiamin from pyridoxine.</title>
        <authorList>
            <person name="Wightman R."/>
            <person name="Meacock P.A."/>
        </authorList>
    </citation>
    <scope>PATHWAY</scope>
</reference>
<feature type="chain" id="PRO_0000211621" description="4-amino-5-hydroxymethyl-2-methylpyrimidine phosphate synthase THI13">
    <location>
        <begin position="1"/>
        <end position="340"/>
    </location>
</feature>
<feature type="short sequence motif" description="CCCFC; essential for catalytic activity, may be the site of iron coordination" evidence="2">
    <location>
        <begin position="195"/>
        <end position="199"/>
    </location>
</feature>
<feature type="active site" evidence="2">
    <location>
        <position position="66"/>
    </location>
</feature>
<feature type="binding site" evidence="2">
    <location>
        <begin position="115"/>
        <end position="118"/>
    </location>
    <ligand>
        <name>pyridoxal 5'-phosphate</name>
        <dbReference type="ChEBI" id="CHEBI:597326"/>
    </ligand>
</feature>
<feature type="modified residue" description="N6-(pyridoxal phosphate)lysine" evidence="2">
    <location>
        <position position="62"/>
    </location>
</feature>
<protein>
    <recommendedName>
        <fullName evidence="2">4-amino-5-hydroxymethyl-2-methylpyrimidine phosphate synthase THI13</fullName>
        <shortName evidence="2">HMP-P synthase</shortName>
        <shortName evidence="2">Hydroxymethylpyrimidine phosphate synthase</shortName>
        <ecNumber evidence="2">2.-.-.-</ecNumber>
    </recommendedName>
    <alternativeName>
        <fullName evidence="3">Thiamine biosynthesis protein 13</fullName>
    </alternativeName>
    <alternativeName>
        <fullName evidence="1">Thiamine pyrimidine synthase</fullName>
    </alternativeName>
</protein>
<dbReference type="EC" id="2.-.-.-" evidence="2"/>
<dbReference type="EMBL" id="Z74292">
    <property type="protein sequence ID" value="CAA98824.1"/>
    <property type="molecule type" value="Genomic_DNA"/>
</dbReference>
<dbReference type="EMBL" id="BK006938">
    <property type="protein sequence ID" value="DAA11623.1"/>
    <property type="molecule type" value="Genomic_DNA"/>
</dbReference>
<dbReference type="PIR" id="S67808">
    <property type="entry name" value="S67808"/>
</dbReference>
<dbReference type="RefSeq" id="NP_010037.1">
    <property type="nucleotide sequence ID" value="NM_001180304.1"/>
</dbReference>
<dbReference type="SMR" id="Q07748"/>
<dbReference type="BioGRID" id="31868">
    <property type="interactions" value="12"/>
</dbReference>
<dbReference type="FunCoup" id="Q07748">
    <property type="interactions" value="176"/>
</dbReference>
<dbReference type="IntAct" id="Q07748">
    <property type="interactions" value="2"/>
</dbReference>
<dbReference type="STRING" id="4932.YDL244W"/>
<dbReference type="PaxDb" id="4932-YDL244W"/>
<dbReference type="EnsemblFungi" id="YDL244W_mRNA">
    <property type="protein sequence ID" value="YDL244W"/>
    <property type="gene ID" value="YDL244W"/>
</dbReference>
<dbReference type="GeneID" id="851353"/>
<dbReference type="KEGG" id="sce:YDL244W"/>
<dbReference type="AGR" id="SGD:S000002403"/>
<dbReference type="SGD" id="S000002403">
    <property type="gene designation" value="THI13"/>
</dbReference>
<dbReference type="VEuPathDB" id="FungiDB:YDL244W"/>
<dbReference type="eggNOG" id="ENOG502QQ87">
    <property type="taxonomic scope" value="Eukaryota"/>
</dbReference>
<dbReference type="GeneTree" id="ENSGT00940000176330"/>
<dbReference type="HOGENOM" id="CLU_028871_6_3_1"/>
<dbReference type="InParanoid" id="Q07748"/>
<dbReference type="OMA" id="TKHYGMT"/>
<dbReference type="OrthoDB" id="434407at2759"/>
<dbReference type="BioCyc" id="YEAST:MONOMER3O-9145"/>
<dbReference type="UniPathway" id="UPA00060"/>
<dbReference type="BioGRID-ORCS" id="851353">
    <property type="hits" value="0 hits in 10 CRISPR screens"/>
</dbReference>
<dbReference type="PRO" id="PR:Q07748"/>
<dbReference type="Proteomes" id="UP000002311">
    <property type="component" value="Chromosome IV"/>
</dbReference>
<dbReference type="RNAct" id="Q07748">
    <property type="molecule type" value="protein"/>
</dbReference>
<dbReference type="GO" id="GO:0106344">
    <property type="term" value="F:4-amino-5-hydroxymethyl-2-methylpyrimidine phosphate synthase activity from histidine and PLP"/>
    <property type="evidence" value="ECO:0000250"/>
    <property type="project" value="UniProtKB"/>
</dbReference>
<dbReference type="GO" id="GO:0046872">
    <property type="term" value="F:metal ion binding"/>
    <property type="evidence" value="ECO:0007669"/>
    <property type="project" value="UniProtKB-KW"/>
</dbReference>
<dbReference type="GO" id="GO:0009228">
    <property type="term" value="P:thiamine biosynthetic process"/>
    <property type="evidence" value="ECO:0000316"/>
    <property type="project" value="SGD"/>
</dbReference>
<dbReference type="GO" id="GO:0009229">
    <property type="term" value="P:thiamine diphosphate biosynthetic process"/>
    <property type="evidence" value="ECO:0007669"/>
    <property type="project" value="UniProtKB-UniPathway"/>
</dbReference>
<dbReference type="CDD" id="cd13650">
    <property type="entry name" value="PBP2_THI5"/>
    <property type="match status" value="1"/>
</dbReference>
<dbReference type="FunFam" id="3.40.190.10:FF:000246">
    <property type="entry name" value="4-amino-5-hydroxymethyl-2-methylpyrimidine phosphate synthase THI13"/>
    <property type="match status" value="1"/>
</dbReference>
<dbReference type="FunFam" id="3.40.190.10:FF:000187">
    <property type="entry name" value="4-amino-5-hydroxymethyl-2-methylpyrimidine phosphate synthase THI5"/>
    <property type="match status" value="1"/>
</dbReference>
<dbReference type="Gene3D" id="3.40.190.10">
    <property type="entry name" value="Periplasmic binding protein-like II"/>
    <property type="match status" value="2"/>
</dbReference>
<dbReference type="InterPro" id="IPR027939">
    <property type="entry name" value="NMT1/THI5"/>
</dbReference>
<dbReference type="InterPro" id="IPR015168">
    <property type="entry name" value="SsuA/THI5"/>
</dbReference>
<dbReference type="PANTHER" id="PTHR31528">
    <property type="entry name" value="4-AMINO-5-HYDROXYMETHYL-2-METHYLPYRIMIDINE PHOSPHATE SYNTHASE THI11-RELATED"/>
    <property type="match status" value="1"/>
</dbReference>
<dbReference type="PANTHER" id="PTHR31528:SF1">
    <property type="entry name" value="4-AMINO-5-HYDROXYMETHYL-2-METHYLPYRIMIDINE PHOSPHATE SYNTHASE THI11-RELATED"/>
    <property type="match status" value="1"/>
</dbReference>
<dbReference type="Pfam" id="PF09084">
    <property type="entry name" value="NMT1"/>
    <property type="match status" value="1"/>
</dbReference>
<dbReference type="SUPFAM" id="SSF53850">
    <property type="entry name" value="Periplasmic binding protein-like II"/>
    <property type="match status" value="1"/>
</dbReference>
<comment type="function">
    <text evidence="2">Responsible for the formation of the pyrimidine heterocycle in the thiamine biosynthesis pathway. Catalyzes the formation of hydroxymethylpyrimidine phosphate (HMP-P) from histidine and pyridoxal phosphate (PLP). The protein uses PLP and the active site histidine to form HMP-P, generating an inactive enzyme. The enzyme can only undergo a single turnover, which suggests it is a suicide enzyme.</text>
</comment>
<comment type="catalytic activity">
    <reaction evidence="2">
        <text>N(6)-(pyridoxal phosphate)-L-lysyl-[4-amino-5-hydroxymethyl-2-methylpyrimidine phosphate synthase] + L-histidyl-[4-amino-5-hydroxymethyl-2-methylpyrimidine phosphate synthase] + 2 Fe(3+) + 4 H2O = L-lysyl-[4-amino-5-hydroxymethyl-2-methylpyrimidine phosphate synthase] + (2S)-2-amino-5-hydroxy-4-oxopentanoyl-[4-amino-5-hydroxymethyl-2-methylpyrimidine phosphate synthase] + 4-amino-2-methyl-5-(phosphooxymethyl)pyrimidine + 3-oxopropanoate + 2 Fe(2+) + 2 H(+)</text>
        <dbReference type="Rhea" id="RHEA:65756"/>
        <dbReference type="Rhea" id="RHEA-COMP:16892"/>
        <dbReference type="Rhea" id="RHEA-COMP:16893"/>
        <dbReference type="Rhea" id="RHEA-COMP:16894"/>
        <dbReference type="Rhea" id="RHEA-COMP:16895"/>
        <dbReference type="ChEBI" id="CHEBI:15377"/>
        <dbReference type="ChEBI" id="CHEBI:15378"/>
        <dbReference type="ChEBI" id="CHEBI:29033"/>
        <dbReference type="ChEBI" id="CHEBI:29034"/>
        <dbReference type="ChEBI" id="CHEBI:29969"/>
        <dbReference type="ChEBI" id="CHEBI:29979"/>
        <dbReference type="ChEBI" id="CHEBI:33190"/>
        <dbReference type="ChEBI" id="CHEBI:58354"/>
        <dbReference type="ChEBI" id="CHEBI:143915"/>
        <dbReference type="ChEBI" id="CHEBI:157692"/>
    </reaction>
    <physiologicalReaction direction="left-to-right" evidence="2">
        <dbReference type="Rhea" id="RHEA:65757"/>
    </physiologicalReaction>
</comment>
<comment type="cofactor">
    <cofactor evidence="2">
        <name>Fe cation</name>
        <dbReference type="ChEBI" id="CHEBI:24875"/>
    </cofactor>
</comment>
<comment type="pathway">
    <text evidence="5">Cofactor biosynthesis; thiamine diphosphate biosynthesis.</text>
</comment>
<comment type="subunit">
    <text evidence="2">Homodimer.</text>
</comment>
<comment type="interaction">
    <interactant intactId="EBI-36080">
        <id>Q07748</id>
    </interactant>
    <interactant intactId="EBI-16219">
        <id>P39940</id>
        <label>RSP5</label>
    </interactant>
    <organismsDiffer>false</organismsDiffer>
    <experiments>2</experiments>
</comment>
<comment type="similarity">
    <text evidence="4">Belongs to the NMT1/THI5 family.</text>
</comment>
<proteinExistence type="evidence at protein level"/>
<organism>
    <name type="scientific">Saccharomyces cerevisiae (strain ATCC 204508 / S288c)</name>
    <name type="common">Baker's yeast</name>
    <dbReference type="NCBI Taxonomy" id="559292"/>
    <lineage>
        <taxon>Eukaryota</taxon>
        <taxon>Fungi</taxon>
        <taxon>Dikarya</taxon>
        <taxon>Ascomycota</taxon>
        <taxon>Saccharomycotina</taxon>
        <taxon>Saccharomycetes</taxon>
        <taxon>Saccharomycetales</taxon>
        <taxon>Saccharomycetaceae</taxon>
        <taxon>Saccharomyces</taxon>
    </lineage>
</organism>